<reference key="1">
    <citation type="journal article" date="2002" name="J. Virol.">
        <title>Comparison of the complete DNA sequences of the Oka varicella vaccine and its parental virus.</title>
        <authorList>
            <person name="Gomi Y."/>
            <person name="Sunamachi H."/>
            <person name="Mori Y."/>
            <person name="Nagaike K."/>
            <person name="Takahashi M."/>
            <person name="Yamanishi K."/>
        </authorList>
    </citation>
    <scope>NUCLEOTIDE SEQUENCE [LARGE SCALE GENOMIC DNA]</scope>
    <source>
        <strain>Isolate Human/Japan/P-Oka/1970</strain>
        <strain>Oka varicella vaccine Biken (V-Oka-Biken)</strain>
    </source>
</reference>
<reference key="2">
    <citation type="journal article" date="2008" name="J. Virol.">
        <title>Complete DNA sequences of two oka strain varicella-zoster virus genomes.</title>
        <authorList>
            <person name="Tillieux S.L."/>
            <person name="Halsey W.S."/>
            <person name="Thomas E.S."/>
            <person name="Voycik J.J."/>
            <person name="Sathe G.M."/>
            <person name="Vassilev V."/>
        </authorList>
    </citation>
    <scope>NUCLEOTIDE SEQUENCE [LARGE SCALE GENOMIC DNA]</scope>
    <source>
        <strain>Oka varicella vaccine VarilRix (V-Oka-GSK)</strain>
        <strain>Oka varicella vaccine Varivax (V-Oka-Merck)</strain>
    </source>
</reference>
<evidence type="ECO:0000255" key="1">
    <source>
        <dbReference type="HAMAP-Rule" id="MF_04031"/>
    </source>
</evidence>
<dbReference type="EC" id="3.6.1.23" evidence="1"/>
<dbReference type="EMBL" id="AB097932">
    <property type="status" value="NOT_ANNOTATED_CDS"/>
    <property type="molecule type" value="Genomic_DNA"/>
</dbReference>
<dbReference type="EMBL" id="AB097933">
    <property type="status" value="NOT_ANNOTATED_CDS"/>
    <property type="molecule type" value="Genomic_DNA"/>
</dbReference>
<dbReference type="EMBL" id="DQ008354">
    <property type="protein sequence ID" value="AAY57626.1"/>
    <property type="molecule type" value="Genomic_DNA"/>
</dbReference>
<dbReference type="EMBL" id="DQ008355">
    <property type="protein sequence ID" value="AAY57697.1"/>
    <property type="molecule type" value="Genomic_DNA"/>
</dbReference>
<dbReference type="IntAct" id="Q4JQW7">
    <property type="interactions" value="8"/>
</dbReference>
<dbReference type="MINT" id="Q4JQW7"/>
<dbReference type="Proteomes" id="UP000002603">
    <property type="component" value="Genome"/>
</dbReference>
<dbReference type="Proteomes" id="UP000008504">
    <property type="component" value="Genome"/>
</dbReference>
<dbReference type="Proteomes" id="UP000008505">
    <property type="component" value="Genome"/>
</dbReference>
<dbReference type="Proteomes" id="UP000008506">
    <property type="component" value="Genome"/>
</dbReference>
<dbReference type="GO" id="GO:0004170">
    <property type="term" value="F:dUTP diphosphatase activity"/>
    <property type="evidence" value="ECO:0007669"/>
    <property type="project" value="UniProtKB-EC"/>
</dbReference>
<dbReference type="GO" id="GO:0046872">
    <property type="term" value="F:metal ion binding"/>
    <property type="evidence" value="ECO:0007669"/>
    <property type="project" value="UniProtKB-KW"/>
</dbReference>
<dbReference type="GO" id="GO:0046080">
    <property type="term" value="P:dUTP metabolic process"/>
    <property type="evidence" value="ECO:0007669"/>
    <property type="project" value="InterPro"/>
</dbReference>
<dbReference type="Gene3D" id="2.70.40.10">
    <property type="match status" value="1"/>
</dbReference>
<dbReference type="HAMAP" id="MF_04031">
    <property type="entry name" value="HSV_DUT"/>
    <property type="match status" value="1"/>
</dbReference>
<dbReference type="InterPro" id="IPR029054">
    <property type="entry name" value="dUTPase-like"/>
</dbReference>
<dbReference type="InterPro" id="IPR036157">
    <property type="entry name" value="dUTPase-like_sf"/>
</dbReference>
<dbReference type="InterPro" id="IPR034745">
    <property type="entry name" value="HSV_DUT"/>
</dbReference>
<dbReference type="Pfam" id="PF00692">
    <property type="entry name" value="dUTPase"/>
    <property type="match status" value="1"/>
</dbReference>
<dbReference type="SUPFAM" id="SSF51283">
    <property type="entry name" value="dUTPase-like"/>
    <property type="match status" value="2"/>
</dbReference>
<proteinExistence type="inferred from homology"/>
<gene>
    <name evidence="1" type="primary">DUT</name>
    <name type="ordered locus">ORF8</name>
</gene>
<organismHost>
    <name type="scientific">Homo sapiens</name>
    <name type="common">Human</name>
    <dbReference type="NCBI Taxonomy" id="9606"/>
</organismHost>
<protein>
    <recommendedName>
        <fullName evidence="1">Deoxyuridine 5'-triphosphate nucleotidohydrolase</fullName>
        <shortName evidence="1">dUTPase</shortName>
        <ecNumber evidence="1">3.6.1.23</ecNumber>
    </recommendedName>
    <alternativeName>
        <fullName evidence="1">dUTP pyrophosphatase</fullName>
    </alternativeName>
</protein>
<organism>
    <name type="scientific">Varicella-zoster virus (strain Oka vaccine)</name>
    <name type="common">HHV-3</name>
    <name type="synonym">Human herpesvirus 3</name>
    <dbReference type="NCBI Taxonomy" id="341980"/>
    <lineage>
        <taxon>Viruses</taxon>
        <taxon>Duplodnaviria</taxon>
        <taxon>Heunggongvirae</taxon>
        <taxon>Peploviricota</taxon>
        <taxon>Herviviricetes</taxon>
        <taxon>Herpesvirales</taxon>
        <taxon>Orthoherpesviridae</taxon>
        <taxon>Alphaherpesvirinae</taxon>
        <taxon>Varicellovirus</taxon>
        <taxon>Varicellovirus humanalpha3</taxon>
        <taxon>Human herpesvirus 3</taxon>
    </lineage>
</organism>
<accession>Q4JQW7</accession>
<feature type="chain" id="PRO_0000385168" description="Deoxyuridine 5'-triphosphate nucleotidohydrolase">
    <location>
        <begin position="1"/>
        <end position="396"/>
    </location>
</feature>
<feature type="binding site" evidence="1">
    <location>
        <begin position="280"/>
        <end position="282"/>
    </location>
    <ligand>
        <name>substrate</name>
    </ligand>
</feature>
<feature type="binding site" evidence="1">
    <location>
        <begin position="380"/>
        <end position="381"/>
    </location>
    <ligand>
        <name>substrate</name>
    </ligand>
</feature>
<sequence length="396" mass="44809">MNEAVIDPILETAVNTGDMFCSQTIPNRCLKDTILIEVQPECADTLQCVLDDKVSRHQPLLLRNHKKLELPSEKSVTRGGFYMQQLELLVKSAPPNEYALLLIQCKDTALADEDNFFVANGVIDAGYRGVISALLYYRPGVTVILPGHLTIYLFPVKLRQSRLLPKNVLKHLDPIFKSIQVQPLSNSPSNYEKPVISEFADISTVQQGQPLHRDSAEYHIDVPLTYKHIINPKRQEDAGYDICVPYNLYLKRNEFIKIVLPIIRDWDLQHPSINAYIFGRSSKSRSGIIVCPTAWPAGEHCKFYVYNLTGDDIRIKTGDRLAQVLLIDHNTQIHLKHNVLSNIAFPYAIRGKCGIPGVQWYFTKTLDLIATPSERGTRGFGSTDKETNDVDFLLKH</sequence>
<comment type="function">
    <text evidence="1">Involved in nucleotide metabolism: produces dUMP, the immediate precursor of thymidine nucleotides and decreases the intracellular concentration of dUTP to avoid uracil incorporation into viral DNA.</text>
</comment>
<comment type="catalytic activity">
    <reaction evidence="1">
        <text>dUTP + H2O = dUMP + diphosphate + H(+)</text>
        <dbReference type="Rhea" id="RHEA:10248"/>
        <dbReference type="ChEBI" id="CHEBI:15377"/>
        <dbReference type="ChEBI" id="CHEBI:15378"/>
        <dbReference type="ChEBI" id="CHEBI:33019"/>
        <dbReference type="ChEBI" id="CHEBI:61555"/>
        <dbReference type="ChEBI" id="CHEBI:246422"/>
        <dbReference type="EC" id="3.6.1.23"/>
    </reaction>
</comment>
<comment type="cofactor">
    <cofactor evidence="1">
        <name>Mg(2+)</name>
        <dbReference type="ChEBI" id="CHEBI:18420"/>
    </cofactor>
</comment>
<comment type="similarity">
    <text evidence="1">Belongs to the dUTPase family.</text>
</comment>
<name>DUT_VZVO</name>
<keyword id="KW-0378">Hydrolase</keyword>
<keyword id="KW-0460">Magnesium</keyword>
<keyword id="KW-0479">Metal-binding</keyword>
<keyword id="KW-0546">Nucleotide metabolism</keyword>